<reference key="1">
    <citation type="journal article" date="2004" name="Nature">
        <title>Genome evolution in yeasts.</title>
        <authorList>
            <person name="Dujon B."/>
            <person name="Sherman D."/>
            <person name="Fischer G."/>
            <person name="Durrens P."/>
            <person name="Casaregola S."/>
            <person name="Lafontaine I."/>
            <person name="de Montigny J."/>
            <person name="Marck C."/>
            <person name="Neuveglise C."/>
            <person name="Talla E."/>
            <person name="Goffard N."/>
            <person name="Frangeul L."/>
            <person name="Aigle M."/>
            <person name="Anthouard V."/>
            <person name="Babour A."/>
            <person name="Barbe V."/>
            <person name="Barnay S."/>
            <person name="Blanchin S."/>
            <person name="Beckerich J.-M."/>
            <person name="Beyne E."/>
            <person name="Bleykasten C."/>
            <person name="Boisrame A."/>
            <person name="Boyer J."/>
            <person name="Cattolico L."/>
            <person name="Confanioleri F."/>
            <person name="de Daruvar A."/>
            <person name="Despons L."/>
            <person name="Fabre E."/>
            <person name="Fairhead C."/>
            <person name="Ferry-Dumazet H."/>
            <person name="Groppi A."/>
            <person name="Hantraye F."/>
            <person name="Hennequin C."/>
            <person name="Jauniaux N."/>
            <person name="Joyet P."/>
            <person name="Kachouri R."/>
            <person name="Kerrest A."/>
            <person name="Koszul R."/>
            <person name="Lemaire M."/>
            <person name="Lesur I."/>
            <person name="Ma L."/>
            <person name="Muller H."/>
            <person name="Nicaud J.-M."/>
            <person name="Nikolski M."/>
            <person name="Oztas S."/>
            <person name="Ozier-Kalogeropoulos O."/>
            <person name="Pellenz S."/>
            <person name="Potier S."/>
            <person name="Richard G.-F."/>
            <person name="Straub M.-L."/>
            <person name="Suleau A."/>
            <person name="Swennen D."/>
            <person name="Tekaia F."/>
            <person name="Wesolowski-Louvel M."/>
            <person name="Westhof E."/>
            <person name="Wirth B."/>
            <person name="Zeniou-Meyer M."/>
            <person name="Zivanovic Y."/>
            <person name="Bolotin-Fukuhara M."/>
            <person name="Thierry A."/>
            <person name="Bouchier C."/>
            <person name="Caudron B."/>
            <person name="Scarpelli C."/>
            <person name="Gaillardin C."/>
            <person name="Weissenbach J."/>
            <person name="Wincker P."/>
            <person name="Souciet J.-L."/>
        </authorList>
    </citation>
    <scope>NUCLEOTIDE SEQUENCE [LARGE SCALE GENOMIC DNA]</scope>
    <source>
        <strain>ATCC 36239 / CBS 767 / BCRC 21394 / JCM 1990 / NBRC 0083 / IGC 2968</strain>
    </source>
</reference>
<keyword id="KW-0963">Cytoplasm</keyword>
<keyword id="KW-1015">Disulfide bond</keyword>
<keyword id="KW-0274">FAD</keyword>
<keyword id="KW-0285">Flavoprotein</keyword>
<keyword id="KW-0521">NADP</keyword>
<keyword id="KW-0560">Oxidoreductase</keyword>
<keyword id="KW-0676">Redox-active center</keyword>
<keyword id="KW-1185">Reference proteome</keyword>
<comment type="catalytic activity">
    <reaction>
        <text>[thioredoxin]-dithiol + NADP(+) = [thioredoxin]-disulfide + NADPH + H(+)</text>
        <dbReference type="Rhea" id="RHEA:20345"/>
        <dbReference type="Rhea" id="RHEA-COMP:10698"/>
        <dbReference type="Rhea" id="RHEA-COMP:10700"/>
        <dbReference type="ChEBI" id="CHEBI:15378"/>
        <dbReference type="ChEBI" id="CHEBI:29950"/>
        <dbReference type="ChEBI" id="CHEBI:50058"/>
        <dbReference type="ChEBI" id="CHEBI:57783"/>
        <dbReference type="ChEBI" id="CHEBI:58349"/>
        <dbReference type="EC" id="1.8.1.9"/>
    </reaction>
</comment>
<comment type="cofactor">
    <cofactor evidence="1">
        <name>FAD</name>
        <dbReference type="ChEBI" id="CHEBI:57692"/>
    </cofactor>
    <text evidence="1">Binds 1 FAD per subunit.</text>
</comment>
<comment type="subunit">
    <text evidence="1">Homodimer.</text>
</comment>
<comment type="subcellular location">
    <subcellularLocation>
        <location evidence="1">Cytoplasm</location>
    </subcellularLocation>
</comment>
<comment type="miscellaneous">
    <text>The active site is a redox-active disulfide bond.</text>
</comment>
<comment type="similarity">
    <text evidence="2">Belongs to the class-II pyridine nucleotide-disulfide oxidoreductase family.</text>
</comment>
<comment type="sequence caution" evidence="2">
    <conflict type="erroneous initiation">
        <sequence resource="EMBL-CDS" id="CAG90363"/>
    </conflict>
</comment>
<protein>
    <recommendedName>
        <fullName>Thioredoxin reductase</fullName>
        <ecNumber>1.8.1.9</ecNumber>
    </recommendedName>
</protein>
<feature type="chain" id="PRO_0000166763" description="Thioredoxin reductase">
    <location>
        <begin position="1"/>
        <end position="321"/>
    </location>
</feature>
<feature type="binding site" evidence="1">
    <location>
        <begin position="11"/>
        <end position="14"/>
    </location>
    <ligand>
        <name>FAD</name>
        <dbReference type="ChEBI" id="CHEBI:57692"/>
    </ligand>
</feature>
<feature type="binding site" evidence="1">
    <location>
        <begin position="40"/>
        <end position="41"/>
    </location>
    <ligand>
        <name>FAD</name>
        <dbReference type="ChEBI" id="CHEBI:57692"/>
    </ligand>
</feature>
<feature type="binding site" evidence="1">
    <location>
        <position position="45"/>
    </location>
    <ligand>
        <name>FAD</name>
        <dbReference type="ChEBI" id="CHEBI:57692"/>
    </ligand>
</feature>
<feature type="binding site" evidence="1">
    <location>
        <position position="54"/>
    </location>
    <ligand>
        <name>FAD</name>
        <dbReference type="ChEBI" id="CHEBI:57692"/>
    </ligand>
</feature>
<feature type="binding site" evidence="1">
    <location>
        <position position="145"/>
    </location>
    <ligand>
        <name>FAD</name>
        <dbReference type="ChEBI" id="CHEBI:57692"/>
    </ligand>
</feature>
<feature type="binding site" evidence="1">
    <location>
        <position position="288"/>
    </location>
    <ligand>
        <name>FAD</name>
        <dbReference type="ChEBI" id="CHEBI:57692"/>
    </ligand>
</feature>
<feature type="binding site" evidence="1">
    <location>
        <begin position="295"/>
        <end position="297"/>
    </location>
    <ligand>
        <name>FAD</name>
        <dbReference type="ChEBI" id="CHEBI:57692"/>
    </ligand>
</feature>
<feature type="disulfide bond" description="Redox-active" evidence="1">
    <location>
        <begin position="142"/>
        <end position="145"/>
    </location>
</feature>
<gene>
    <name type="primary">TRR1</name>
    <name type="ordered locus">DEHA2G08096g</name>
</gene>
<dbReference type="EC" id="1.8.1.9"/>
<dbReference type="EMBL" id="CR382139">
    <property type="protein sequence ID" value="CAG90363.2"/>
    <property type="status" value="ALT_INIT"/>
    <property type="molecule type" value="Genomic_DNA"/>
</dbReference>
<dbReference type="RefSeq" id="XP_461900.2">
    <property type="nucleotide sequence ID" value="XM_461900.2"/>
</dbReference>
<dbReference type="SMR" id="Q6BIS1"/>
<dbReference type="FunCoup" id="Q6BIS1">
    <property type="interactions" value="262"/>
</dbReference>
<dbReference type="STRING" id="284592.Q6BIS1"/>
<dbReference type="GeneID" id="2904781"/>
<dbReference type="KEGG" id="dha:DEHA2G08096g"/>
<dbReference type="eggNOG" id="KOG0404">
    <property type="taxonomic scope" value="Eukaryota"/>
</dbReference>
<dbReference type="HOGENOM" id="CLU_031864_5_1_1"/>
<dbReference type="InParanoid" id="Q6BIS1"/>
<dbReference type="OrthoDB" id="371245at2759"/>
<dbReference type="Proteomes" id="UP000000599">
    <property type="component" value="Chromosome G"/>
</dbReference>
<dbReference type="GO" id="GO:0005737">
    <property type="term" value="C:cytoplasm"/>
    <property type="evidence" value="ECO:0007669"/>
    <property type="project" value="UniProtKB-SubCell"/>
</dbReference>
<dbReference type="GO" id="GO:0004791">
    <property type="term" value="F:thioredoxin-disulfide reductase (NADPH) activity"/>
    <property type="evidence" value="ECO:0007669"/>
    <property type="project" value="UniProtKB-EC"/>
</dbReference>
<dbReference type="GO" id="GO:0019430">
    <property type="term" value="P:removal of superoxide radicals"/>
    <property type="evidence" value="ECO:0007669"/>
    <property type="project" value="InterPro"/>
</dbReference>
<dbReference type="FunFam" id="3.50.50.60:FF:000064">
    <property type="entry name" value="Thioredoxin reductase"/>
    <property type="match status" value="1"/>
</dbReference>
<dbReference type="Gene3D" id="3.50.50.60">
    <property type="entry name" value="FAD/NAD(P)-binding domain"/>
    <property type="match status" value="2"/>
</dbReference>
<dbReference type="InterPro" id="IPR036188">
    <property type="entry name" value="FAD/NAD-bd_sf"/>
</dbReference>
<dbReference type="InterPro" id="IPR023753">
    <property type="entry name" value="FAD/NAD-binding_dom"/>
</dbReference>
<dbReference type="InterPro" id="IPR050097">
    <property type="entry name" value="Ferredoxin-NADP_redctase_2"/>
</dbReference>
<dbReference type="InterPro" id="IPR008255">
    <property type="entry name" value="Pyr_nucl-diS_OxRdtase_2_AS"/>
</dbReference>
<dbReference type="InterPro" id="IPR005982">
    <property type="entry name" value="Thioredox_Rdtase"/>
</dbReference>
<dbReference type="NCBIfam" id="TIGR01292">
    <property type="entry name" value="TRX_reduct"/>
    <property type="match status" value="1"/>
</dbReference>
<dbReference type="PANTHER" id="PTHR48105">
    <property type="entry name" value="THIOREDOXIN REDUCTASE 1-RELATED-RELATED"/>
    <property type="match status" value="1"/>
</dbReference>
<dbReference type="Pfam" id="PF07992">
    <property type="entry name" value="Pyr_redox_2"/>
    <property type="match status" value="1"/>
</dbReference>
<dbReference type="PRINTS" id="PR00368">
    <property type="entry name" value="FADPNR"/>
</dbReference>
<dbReference type="PRINTS" id="PR00469">
    <property type="entry name" value="PNDRDTASEII"/>
</dbReference>
<dbReference type="SUPFAM" id="SSF51905">
    <property type="entry name" value="FAD/NAD(P)-binding domain"/>
    <property type="match status" value="1"/>
</dbReference>
<dbReference type="PROSITE" id="PS00573">
    <property type="entry name" value="PYRIDINE_REDOX_2"/>
    <property type="match status" value="1"/>
</dbReference>
<name>TRXB_DEBHA</name>
<organism>
    <name type="scientific">Debaryomyces hansenii (strain ATCC 36239 / CBS 767 / BCRC 21394 / JCM 1990 / NBRC 0083 / IGC 2968)</name>
    <name type="common">Yeast</name>
    <name type="synonym">Torulaspora hansenii</name>
    <dbReference type="NCBI Taxonomy" id="284592"/>
    <lineage>
        <taxon>Eukaryota</taxon>
        <taxon>Fungi</taxon>
        <taxon>Dikarya</taxon>
        <taxon>Ascomycota</taxon>
        <taxon>Saccharomycotina</taxon>
        <taxon>Pichiomycetes</taxon>
        <taxon>Debaryomycetaceae</taxon>
        <taxon>Debaryomyces</taxon>
    </lineage>
</organism>
<sequence length="321" mass="34975">MVHHNVTIIGSGPAAHTAAIYLSRAEIKPTLYEGMLANGTAAGGQLTTTTDVENFPGFPKGINGTELMDQMREQSVRFGTDIITETISKCDLSSRPFKLWTEWNEDSEPITTDAVVIATGASAKRMHLPGEDTYWQQGISACAVCDGAVPIFRNKPLAVVGGGDSACEEALFLTKYGSKVYLLVRRDQLRASNIMQKRVQNNDKLEILWNSEAKEAKGDGKLLQNISVYNNKTKETKDLPVNGLFYAIGHIPATQIFAKQLETDDQNYILTKPGTAETSIPGVFAAGDVQDKRYRQAITSAGTGCMAALDCEKFLSEEEAK</sequence>
<evidence type="ECO:0000250" key="1">
    <source>
        <dbReference type="UniProtKB" id="P29509"/>
    </source>
</evidence>
<evidence type="ECO:0000305" key="2"/>
<proteinExistence type="inferred from homology"/>
<accession>Q6BIS1</accession>